<reference key="1">
    <citation type="journal article" date="1985" name="Curr. Genet.">
        <title>The gene for yeast ribosomal protein S31 contains an intron in the leader sequence.</title>
        <authorList>
            <person name="Nieuwint R.T.M."/>
            <person name="Molenaar C.M.T."/>
            <person name="van Bommel J.H."/>
            <person name="van Raamsdonk-Duin M.M.C."/>
            <person name="Mager W.H."/>
            <person name="Planta R.J."/>
        </authorList>
    </citation>
    <scope>NUCLEOTIDE SEQUENCE [GENOMIC DNA]</scope>
    <source>
        <strain>Carlsbergensis</strain>
    </source>
</reference>
<reference key="2">
    <citation type="journal article" date="1997" name="Yeast">
        <title>Sequence analysis of 203 kilobases from Saccharomyces cerevisiae chromosome VII.</title>
        <authorList>
            <person name="Rieger M."/>
            <person name="Brueckner M."/>
            <person name="Schaefer M."/>
            <person name="Mueller-Auer S."/>
        </authorList>
    </citation>
    <scope>NUCLEOTIDE SEQUENCE [GENOMIC DNA]</scope>
    <source>
        <strain>ATCC 204508 / S288c</strain>
    </source>
</reference>
<reference key="3">
    <citation type="journal article" date="1997" name="Nature">
        <title>The nucleotide sequence of Saccharomyces cerevisiae chromosome VII.</title>
        <authorList>
            <person name="Tettelin H."/>
            <person name="Agostoni-Carbone M.L."/>
            <person name="Albermann K."/>
            <person name="Albers M."/>
            <person name="Arroyo J."/>
            <person name="Backes U."/>
            <person name="Barreiros T."/>
            <person name="Bertani I."/>
            <person name="Bjourson A.J."/>
            <person name="Brueckner M."/>
            <person name="Bruschi C.V."/>
            <person name="Carignani G."/>
            <person name="Castagnoli L."/>
            <person name="Cerdan E."/>
            <person name="Clemente M.L."/>
            <person name="Coblenz A."/>
            <person name="Coglievina M."/>
            <person name="Coissac E."/>
            <person name="Defoor E."/>
            <person name="Del Bino S."/>
            <person name="Delius H."/>
            <person name="Delneri D."/>
            <person name="de Wergifosse P."/>
            <person name="Dujon B."/>
            <person name="Durand P."/>
            <person name="Entian K.-D."/>
            <person name="Eraso P."/>
            <person name="Escribano V."/>
            <person name="Fabiani L."/>
            <person name="Fartmann B."/>
            <person name="Feroli F."/>
            <person name="Feuermann M."/>
            <person name="Frontali L."/>
            <person name="Garcia-Gonzalez M."/>
            <person name="Garcia-Saez M.I."/>
            <person name="Goffeau A."/>
            <person name="Guerreiro P."/>
            <person name="Hani J."/>
            <person name="Hansen M."/>
            <person name="Hebling U."/>
            <person name="Hernandez K."/>
            <person name="Heumann K."/>
            <person name="Hilger F."/>
            <person name="Hofmann B."/>
            <person name="Indge K.J."/>
            <person name="James C.M."/>
            <person name="Klima R."/>
            <person name="Koetter P."/>
            <person name="Kramer B."/>
            <person name="Kramer W."/>
            <person name="Lauquin G."/>
            <person name="Leuther H."/>
            <person name="Louis E.J."/>
            <person name="Maillier E."/>
            <person name="Marconi A."/>
            <person name="Martegani E."/>
            <person name="Mazon M.J."/>
            <person name="Mazzoni C."/>
            <person name="McReynolds A.D.K."/>
            <person name="Melchioretto P."/>
            <person name="Mewes H.-W."/>
            <person name="Minenkova O."/>
            <person name="Mueller-Auer S."/>
            <person name="Nawrocki A."/>
            <person name="Netter P."/>
            <person name="Neu R."/>
            <person name="Nombela C."/>
            <person name="Oliver S.G."/>
            <person name="Panzeri L."/>
            <person name="Paoluzi S."/>
            <person name="Plevani P."/>
            <person name="Portetelle D."/>
            <person name="Portillo F."/>
            <person name="Potier S."/>
            <person name="Purnelle B."/>
            <person name="Rieger M."/>
            <person name="Riles L."/>
            <person name="Rinaldi T."/>
            <person name="Robben J."/>
            <person name="Rodrigues-Pousada C."/>
            <person name="Rodriguez-Belmonte E."/>
            <person name="Rodriguez-Torres A.M."/>
            <person name="Rose M."/>
            <person name="Ruzzi M."/>
            <person name="Saliola M."/>
            <person name="Sanchez-Perez M."/>
            <person name="Schaefer B."/>
            <person name="Schaefer M."/>
            <person name="Scharfe M."/>
            <person name="Schmidheini T."/>
            <person name="Schreer A."/>
            <person name="Skala J."/>
            <person name="Souciet J.-L."/>
            <person name="Steensma H.Y."/>
            <person name="Talla E."/>
            <person name="Thierry A."/>
            <person name="Vandenbol M."/>
            <person name="van der Aart Q.J.M."/>
            <person name="Van Dyck L."/>
            <person name="Vanoni M."/>
            <person name="Verhasselt P."/>
            <person name="Voet M."/>
            <person name="Volckaert G."/>
            <person name="Wambutt R."/>
            <person name="Watson M.D."/>
            <person name="Weber N."/>
            <person name="Wedler E."/>
            <person name="Wedler H."/>
            <person name="Wipfli P."/>
            <person name="Wolf K."/>
            <person name="Wright L.F."/>
            <person name="Zaccaria P."/>
            <person name="Zimmermann M."/>
            <person name="Zollner A."/>
            <person name="Kleine K."/>
        </authorList>
    </citation>
    <scope>NUCLEOTIDE SEQUENCE [LARGE SCALE GENOMIC DNA]</scope>
    <source>
        <strain>ATCC 204508 / S288c</strain>
    </source>
</reference>
<reference key="4">
    <citation type="journal article" date="2014" name="G3 (Bethesda)">
        <title>The reference genome sequence of Saccharomyces cerevisiae: Then and now.</title>
        <authorList>
            <person name="Engel S.R."/>
            <person name="Dietrich F.S."/>
            <person name="Fisk D.G."/>
            <person name="Binkley G."/>
            <person name="Balakrishnan R."/>
            <person name="Costanzo M.C."/>
            <person name="Dwight S.S."/>
            <person name="Hitz B.C."/>
            <person name="Karra K."/>
            <person name="Nash R.S."/>
            <person name="Weng S."/>
            <person name="Wong E.D."/>
            <person name="Lloyd P."/>
            <person name="Skrzypek M.S."/>
            <person name="Miyasato S.R."/>
            <person name="Simison M."/>
            <person name="Cherry J.M."/>
        </authorList>
    </citation>
    <scope>GENOME REANNOTATION</scope>
    <source>
        <strain>ATCC 204508 / S288c</strain>
    </source>
</reference>
<reference key="5">
    <citation type="journal article" date="2007" name="Proc. Natl. Acad. Sci. U.S.A.">
        <title>High-density yeast-tiling array reveals previously undiscovered introns and extensive regulation of meiotic splicing.</title>
        <authorList>
            <person name="Juneau K."/>
            <person name="Palm C."/>
            <person name="Miranda M."/>
            <person name="Davis R.W."/>
        </authorList>
    </citation>
    <scope>NUCLEOTIDE SEQUENCE [MRNA] OF 1-96</scope>
    <source>
        <strain>ATCC 201390 / BY4743</strain>
    </source>
</reference>
<reference key="6">
    <citation type="journal article" date="2005" name="Nat. Genet.">
        <title>Quantitative trait loci mapped to single-nucleotide resolution in yeast.</title>
        <authorList>
            <person name="Deutschbauer A.M."/>
            <person name="Davis R.W."/>
        </authorList>
    </citation>
    <scope>NUCLEOTIDE SEQUENCE [GENOMIC DNA] OF 5-108</scope>
    <scope>VARIANTS PHE-8 AND THR-13</scope>
    <source>
        <strain>SK1</strain>
    </source>
</reference>
<reference key="7">
    <citation type="journal article" date="1984" name="Mol. Gen. Genet.">
        <title>Yeast ribosomal proteins. VIII. Isolation of two proteins and sequence characterization of twenty-four proteins from cytoplasmic ribosomes.</title>
        <authorList>
            <person name="Otaka E."/>
            <person name="Higo K."/>
            <person name="Itoh T."/>
        </authorList>
    </citation>
    <scope>PARTIAL PROTEIN SEQUENCE OF 15-22</scope>
</reference>
<reference key="8">
    <citation type="journal article" date="1998" name="Yeast">
        <title>The list of cytoplasmic ribosomal proteins of Saccharomyces cerevisiae.</title>
        <authorList>
            <person name="Planta R.J."/>
            <person name="Mager W.H."/>
        </authorList>
    </citation>
    <scope>NOMENCLATURE</scope>
    <scope>SUBUNIT</scope>
</reference>
<reference key="9">
    <citation type="journal article" date="2003" name="Nature">
        <title>Global analysis of protein localization in budding yeast.</title>
        <authorList>
            <person name="Huh W.-K."/>
            <person name="Falvo J.V."/>
            <person name="Gerke L.C."/>
            <person name="Carroll A.S."/>
            <person name="Howson R.W."/>
            <person name="Weissman J.S."/>
            <person name="O'Shea E.K."/>
        </authorList>
    </citation>
    <scope>SUBCELLULAR LOCATION [LARGE SCALE ANALYSIS]</scope>
</reference>
<reference key="10">
    <citation type="journal article" date="2003" name="Nature">
        <title>Global analysis of protein expression in yeast.</title>
        <authorList>
            <person name="Ghaemmaghami S."/>
            <person name="Huh W.-K."/>
            <person name="Bower K."/>
            <person name="Howson R.W."/>
            <person name="Belle A."/>
            <person name="Dephoure N."/>
            <person name="O'Shea E.K."/>
            <person name="Weissman J.S."/>
        </authorList>
    </citation>
    <scope>LEVEL OF PROTEIN EXPRESSION [LARGE SCALE ANALYSIS]</scope>
</reference>
<reference key="11">
    <citation type="journal article" date="2010" name="Biochemistry">
        <title>Identification of protein N-terminal methyltransferases in yeast and humans.</title>
        <authorList>
            <person name="Webb K.J."/>
            <person name="Lipson R.S."/>
            <person name="Al-Hadid Q."/>
            <person name="Whitelegge J.P."/>
            <person name="Clarke S.G."/>
        </authorList>
    </citation>
    <scope>METHYLATION AT PRO-2 BY NTM1/TAE1</scope>
</reference>
<reference key="12">
    <citation type="journal article" date="2014" name="Curr. Opin. Struct. Biol.">
        <title>A new system for naming ribosomal proteins.</title>
        <authorList>
            <person name="Ban N."/>
            <person name="Beckmann R."/>
            <person name="Cate J.H.D."/>
            <person name="Dinman J.D."/>
            <person name="Dragon F."/>
            <person name="Ellis S.R."/>
            <person name="Lafontaine D.L.J."/>
            <person name="Lindahl L."/>
            <person name="Liljas A."/>
            <person name="Lipton J.M."/>
            <person name="McAlear M.A."/>
            <person name="Moore P.B."/>
            <person name="Noller H.F."/>
            <person name="Ortega J."/>
            <person name="Panse V.G."/>
            <person name="Ramakrishnan V."/>
            <person name="Spahn C.M.T."/>
            <person name="Steitz T.A."/>
            <person name="Tchorzewski M."/>
            <person name="Tollervey D."/>
            <person name="Warren A.J."/>
            <person name="Williamson J.R."/>
            <person name="Wilson D."/>
            <person name="Yonath A."/>
            <person name="Yusupov M."/>
        </authorList>
    </citation>
    <scope>NOMENCLATURE</scope>
</reference>
<reference key="13">
    <citation type="journal article" date="2010" name="Proc. Natl. Acad. Sci. U.S.A.">
        <title>Cryo-EM structure and rRNA model of a translating eukaryotic 80S ribosome at 5.5-A resolution.</title>
        <authorList>
            <person name="Armache J.P."/>
            <person name="Jarasch A."/>
            <person name="Anger A.M."/>
            <person name="Villa E."/>
            <person name="Becker T."/>
            <person name="Bhushan S."/>
            <person name="Jossinet F."/>
            <person name="Habeck M."/>
            <person name="Dindar G."/>
            <person name="Franckenberg S."/>
            <person name="Marquez V."/>
            <person name="Mielke T."/>
            <person name="Thomm M."/>
            <person name="Berninghausen O."/>
            <person name="Beatrix B."/>
            <person name="Soding J."/>
            <person name="Westhof E."/>
            <person name="Wilson D.N."/>
            <person name="Beckmann R."/>
        </authorList>
    </citation>
    <scope>STRUCTURE BY ELECTRON MICROSCOPY (8.80 ANGSTROMS)</scope>
</reference>
<reference key="14">
    <citation type="journal article" date="2010" name="Science">
        <title>Crystal structure of the eukaryotic ribosome.</title>
        <authorList>
            <person name="Ben-Shem A."/>
            <person name="Jenner L."/>
            <person name="Yusupova G."/>
            <person name="Yusupov M."/>
        </authorList>
    </citation>
    <scope>X-RAY CRYSTALLOGRAPHY (4.00 ANGSTROMS) OF 80S RIBOSOME</scope>
</reference>
<reference key="15">
    <citation type="journal article" date="2011" name="Science">
        <title>The structure of the eukaryotic ribosome at 3.0 A resolution.</title>
        <authorList>
            <person name="Ben-Shem A."/>
            <person name="Garreau de Loubresse N."/>
            <person name="Melnikov S."/>
            <person name="Jenner L."/>
            <person name="Yusupova G."/>
            <person name="Yusupov M."/>
        </authorList>
    </citation>
    <scope>X-RAY CRYSTALLOGRAPHY (3.00 ANGSTROMS) OF 80S RIBOSOME</scope>
    <scope>SUBUNIT</scope>
    <scope>SUBCELLULAR LOCATION</scope>
</reference>
<comment type="function">
    <text evidence="10">Component of the ribosome, a large ribonucleoprotein complex responsible for the synthesis of proteins in the cell. The small ribosomal subunit (SSU) binds messenger RNAs (mRNAs) and translates the encoded message by selecting cognate aminoacyl-transfer RNA (tRNA) molecules. The large subunit (LSU) contains the ribosomal catalytic site termed the peptidyl transferase center (PTC), which catalyzes the formation of peptide bonds, thereby polymerizing the amino acids delivered by tRNAs into a polypeptide chain. The nascent polypeptides leave the ribosome through a tunnel in the LSU and interact with protein factors that function in enzymatic processing, targeting, and the membrane insertion of nascent chains at the exit of the ribosomal tunnel.</text>
</comment>
<comment type="subunit">
    <text evidence="6 12">Component of the small ribosomal subunit (SSU). Mature yeast ribosomes consist of a small (40S) and a large (60S) subunit. The 40S small subunit contains 1 molecule of ribosomal RNA (18S rRNA) and 33 different proteins (encoded by 57 genes). The large 60S subunit contains 3 rRNA molecules (25S, 5.8S and 5S rRNA) and 46 different proteins (encoded by 81 genes) (PubMed:22096102, PubMed:9559554).</text>
</comment>
<comment type="subcellular location">
    <subcellularLocation>
        <location evidence="2 6">Cytoplasm</location>
    </subcellularLocation>
</comment>
<comment type="miscellaneous">
    <text evidence="11">It is presumed that the precursor part of S25 is engaged in assembling of the small subunit, thus being essential in ribosome maturation.</text>
</comment>
<comment type="miscellaneous">
    <text evidence="3">Present with 322000 molecules/cell in log phase SD medium.</text>
</comment>
<comment type="miscellaneous">
    <text evidence="9">There are 2 genes for eS25 in yeast.</text>
</comment>
<comment type="similarity">
    <text evidence="9">Belongs to the eukaryotic ribosomal protein eS25 family.</text>
</comment>
<protein>
    <recommendedName>
        <fullName evidence="7">Small ribosomal subunit protein eS25A</fullName>
    </recommendedName>
    <alternativeName>
        <fullName evidence="8">40S ribosomal protein S25-A</fullName>
    </alternativeName>
    <alternativeName>
        <fullName>RP45</fullName>
    </alternativeName>
    <alternativeName>
        <fullName>S31</fullName>
    </alternativeName>
    <alternativeName>
        <fullName>YS23</fullName>
    </alternativeName>
</protein>
<name>RS25A_YEAST</name>
<dbReference type="EMBL" id="X03013">
    <property type="protein sequence ID" value="CAA26797.1"/>
    <property type="molecule type" value="Genomic_DNA"/>
</dbReference>
<dbReference type="EMBL" id="Z72812">
    <property type="protein sequence ID" value="CAA97010.1"/>
    <property type="molecule type" value="Genomic_DNA"/>
</dbReference>
<dbReference type="EMBL" id="DQ115389">
    <property type="protein sequence ID" value="AAZ22490.1"/>
    <property type="molecule type" value="Genomic_DNA"/>
</dbReference>
<dbReference type="EMBL" id="EF123137">
    <property type="protein sequence ID" value="ABM97481.1"/>
    <property type="molecule type" value="mRNA"/>
</dbReference>
<dbReference type="EMBL" id="BK006941">
    <property type="protein sequence ID" value="DAA08121.1"/>
    <property type="molecule type" value="Genomic_DNA"/>
</dbReference>
<dbReference type="PIR" id="S05844">
    <property type="entry name" value="R3BY31"/>
</dbReference>
<dbReference type="RefSeq" id="NP_011541.1">
    <property type="nucleotide sequence ID" value="NM_001181156.1"/>
</dbReference>
<dbReference type="PDB" id="3J6X">
    <property type="method" value="EM"/>
    <property type="resolution" value="6.10 A"/>
    <property type="chains" value="25=1-108"/>
</dbReference>
<dbReference type="PDB" id="3J6Y">
    <property type="method" value="EM"/>
    <property type="resolution" value="6.10 A"/>
    <property type="chains" value="25=1-108"/>
</dbReference>
<dbReference type="PDB" id="3J77">
    <property type="method" value="EM"/>
    <property type="resolution" value="6.20 A"/>
    <property type="chains" value="25=1-108"/>
</dbReference>
<dbReference type="PDB" id="3J78">
    <property type="method" value="EM"/>
    <property type="resolution" value="6.30 A"/>
    <property type="chains" value="25=1-108"/>
</dbReference>
<dbReference type="PDB" id="4U3M">
    <property type="method" value="X-ray"/>
    <property type="resolution" value="3.00 A"/>
    <property type="chains" value="D5/d5=2-108"/>
</dbReference>
<dbReference type="PDB" id="4U3N">
    <property type="method" value="X-ray"/>
    <property type="resolution" value="3.20 A"/>
    <property type="chains" value="D5/d5=2-108"/>
</dbReference>
<dbReference type="PDB" id="4U3U">
    <property type="method" value="X-ray"/>
    <property type="resolution" value="2.90 A"/>
    <property type="chains" value="D5/d5=2-108"/>
</dbReference>
<dbReference type="PDB" id="4U4N">
    <property type="method" value="X-ray"/>
    <property type="resolution" value="3.10 A"/>
    <property type="chains" value="D5/d5=2-108"/>
</dbReference>
<dbReference type="PDB" id="4U4O">
    <property type="method" value="X-ray"/>
    <property type="resolution" value="3.60 A"/>
    <property type="chains" value="D5/d5=2-108"/>
</dbReference>
<dbReference type="PDB" id="4U4Q">
    <property type="method" value="X-ray"/>
    <property type="resolution" value="3.00 A"/>
    <property type="chains" value="D5/d5=2-108"/>
</dbReference>
<dbReference type="PDB" id="4U4R">
    <property type="method" value="X-ray"/>
    <property type="resolution" value="2.80 A"/>
    <property type="chains" value="D5/d5=2-108"/>
</dbReference>
<dbReference type="PDB" id="4U4U">
    <property type="method" value="X-ray"/>
    <property type="resolution" value="3.00 A"/>
    <property type="chains" value="D5/d5=2-108"/>
</dbReference>
<dbReference type="PDB" id="4U4Y">
    <property type="method" value="X-ray"/>
    <property type="resolution" value="3.20 A"/>
    <property type="chains" value="D5/d5=2-108"/>
</dbReference>
<dbReference type="PDB" id="4U4Z">
    <property type="method" value="X-ray"/>
    <property type="resolution" value="3.10 A"/>
    <property type="chains" value="D5/d5=2-108"/>
</dbReference>
<dbReference type="PDB" id="4U50">
    <property type="method" value="X-ray"/>
    <property type="resolution" value="3.20 A"/>
    <property type="chains" value="D5/d5=2-108"/>
</dbReference>
<dbReference type="PDB" id="4U51">
    <property type="method" value="X-ray"/>
    <property type="resolution" value="3.20 A"/>
    <property type="chains" value="D5/d5=2-108"/>
</dbReference>
<dbReference type="PDB" id="4U52">
    <property type="method" value="X-ray"/>
    <property type="resolution" value="3.00 A"/>
    <property type="chains" value="D5/d5=2-108"/>
</dbReference>
<dbReference type="PDB" id="4U53">
    <property type="method" value="X-ray"/>
    <property type="resolution" value="3.30 A"/>
    <property type="chains" value="D5/d5=2-108"/>
</dbReference>
<dbReference type="PDB" id="4U55">
    <property type="method" value="X-ray"/>
    <property type="resolution" value="3.20 A"/>
    <property type="chains" value="D5/d5=2-108"/>
</dbReference>
<dbReference type="PDB" id="4U56">
    <property type="method" value="X-ray"/>
    <property type="resolution" value="3.45 A"/>
    <property type="chains" value="D5/d5=2-108"/>
</dbReference>
<dbReference type="PDB" id="4U6F">
    <property type="method" value="X-ray"/>
    <property type="resolution" value="3.10 A"/>
    <property type="chains" value="D5/d5=2-108"/>
</dbReference>
<dbReference type="PDB" id="4V6I">
    <property type="method" value="EM"/>
    <property type="resolution" value="8.80 A"/>
    <property type="chains" value="AV=1-108"/>
</dbReference>
<dbReference type="PDB" id="4V7R">
    <property type="method" value="X-ray"/>
    <property type="resolution" value="4.00 A"/>
    <property type="chains" value="AQ/CQ=1-108"/>
</dbReference>
<dbReference type="PDB" id="4V88">
    <property type="method" value="X-ray"/>
    <property type="resolution" value="3.00 A"/>
    <property type="chains" value="AZ/CZ=1-108"/>
</dbReference>
<dbReference type="PDB" id="4V8Y">
    <property type="method" value="EM"/>
    <property type="resolution" value="4.30 A"/>
    <property type="chains" value="AZ=1-108"/>
</dbReference>
<dbReference type="PDB" id="4V8Z">
    <property type="method" value="EM"/>
    <property type="resolution" value="6.60 A"/>
    <property type="chains" value="AZ=1-108"/>
</dbReference>
<dbReference type="PDB" id="4V92">
    <property type="method" value="EM"/>
    <property type="resolution" value="3.70 A"/>
    <property type="chains" value="Z=42-105"/>
</dbReference>
<dbReference type="PDB" id="5DAT">
    <property type="method" value="X-ray"/>
    <property type="resolution" value="3.15 A"/>
    <property type="chains" value="D5/d5=2-108"/>
</dbReference>
<dbReference type="PDB" id="5DC3">
    <property type="method" value="X-ray"/>
    <property type="resolution" value="3.25 A"/>
    <property type="chains" value="D5/d5=2-108"/>
</dbReference>
<dbReference type="PDB" id="5DGE">
    <property type="method" value="X-ray"/>
    <property type="resolution" value="3.45 A"/>
    <property type="chains" value="D5/d5=2-108"/>
</dbReference>
<dbReference type="PDB" id="5DGF">
    <property type="method" value="X-ray"/>
    <property type="resolution" value="3.30 A"/>
    <property type="chains" value="D5/d5=2-108"/>
</dbReference>
<dbReference type="PDB" id="5DGV">
    <property type="method" value="X-ray"/>
    <property type="resolution" value="3.10 A"/>
    <property type="chains" value="D5/d5=2-108"/>
</dbReference>
<dbReference type="PDB" id="5FCI">
    <property type="method" value="X-ray"/>
    <property type="resolution" value="3.40 A"/>
    <property type="chains" value="D5/d5=2-108"/>
</dbReference>
<dbReference type="PDB" id="5FCJ">
    <property type="method" value="X-ray"/>
    <property type="resolution" value="3.10 A"/>
    <property type="chains" value="D5/d5=2-108"/>
</dbReference>
<dbReference type="PDB" id="5I4L">
    <property type="method" value="X-ray"/>
    <property type="resolution" value="3.10 A"/>
    <property type="chains" value="D5/d5=36-105"/>
</dbReference>
<dbReference type="PDB" id="5JUO">
    <property type="method" value="EM"/>
    <property type="resolution" value="4.00 A"/>
    <property type="chains" value="WB=1-108"/>
</dbReference>
<dbReference type="PDB" id="5JUP">
    <property type="method" value="EM"/>
    <property type="resolution" value="3.50 A"/>
    <property type="chains" value="WB=1-108"/>
</dbReference>
<dbReference type="PDB" id="5JUS">
    <property type="method" value="EM"/>
    <property type="resolution" value="4.20 A"/>
    <property type="chains" value="WB=1-108"/>
</dbReference>
<dbReference type="PDB" id="5JUT">
    <property type="method" value="EM"/>
    <property type="resolution" value="4.00 A"/>
    <property type="chains" value="WB=1-108"/>
</dbReference>
<dbReference type="PDB" id="5JUU">
    <property type="method" value="EM"/>
    <property type="resolution" value="4.00 A"/>
    <property type="chains" value="WB=1-108"/>
</dbReference>
<dbReference type="PDB" id="5LYB">
    <property type="method" value="X-ray"/>
    <property type="resolution" value="3.25 A"/>
    <property type="chains" value="D5/d5=36-105"/>
</dbReference>
<dbReference type="PDB" id="5M1J">
    <property type="method" value="EM"/>
    <property type="resolution" value="3.30 A"/>
    <property type="chains" value="Z2=36-105"/>
</dbReference>
<dbReference type="PDB" id="5MC6">
    <property type="method" value="EM"/>
    <property type="resolution" value="3.80 A"/>
    <property type="chains" value="K=1-108"/>
</dbReference>
<dbReference type="PDB" id="5MEI">
    <property type="method" value="X-ray"/>
    <property type="resolution" value="3.50 A"/>
    <property type="chains" value="a/d5=36-105"/>
</dbReference>
<dbReference type="PDB" id="5NDG">
    <property type="method" value="X-ray"/>
    <property type="resolution" value="3.70 A"/>
    <property type="chains" value="D5/d5=36-105"/>
</dbReference>
<dbReference type="PDB" id="5NDV">
    <property type="method" value="X-ray"/>
    <property type="resolution" value="3.30 A"/>
    <property type="chains" value="D5/d5=36-105"/>
</dbReference>
<dbReference type="PDB" id="5NDW">
    <property type="method" value="X-ray"/>
    <property type="resolution" value="3.70 A"/>
    <property type="chains" value="D5/d5=36-105"/>
</dbReference>
<dbReference type="PDB" id="5OBM">
    <property type="method" value="X-ray"/>
    <property type="resolution" value="3.40 A"/>
    <property type="chains" value="D5/d5=36-105"/>
</dbReference>
<dbReference type="PDB" id="5ON6">
    <property type="method" value="X-ray"/>
    <property type="resolution" value="3.10 A"/>
    <property type="chains" value="a/d5=36-105"/>
</dbReference>
<dbReference type="PDB" id="5TBW">
    <property type="method" value="X-ray"/>
    <property type="resolution" value="3.00 A"/>
    <property type="chains" value="a/d5=36-105"/>
</dbReference>
<dbReference type="PDB" id="5TGA">
    <property type="method" value="X-ray"/>
    <property type="resolution" value="3.30 A"/>
    <property type="chains" value="D5/d5=36-105"/>
</dbReference>
<dbReference type="PDB" id="5TGM">
    <property type="method" value="X-ray"/>
    <property type="resolution" value="3.50 A"/>
    <property type="chains" value="D5/d5=36-105"/>
</dbReference>
<dbReference type="PDB" id="6EML">
    <property type="method" value="EM"/>
    <property type="resolution" value="3.60 A"/>
    <property type="chains" value="K=1-108"/>
</dbReference>
<dbReference type="PDB" id="6FAI">
    <property type="method" value="EM"/>
    <property type="resolution" value="3.40 A"/>
    <property type="chains" value="Z=1-108"/>
</dbReference>
<dbReference type="PDB" id="6GQ1">
    <property type="method" value="EM"/>
    <property type="resolution" value="4.40 A"/>
    <property type="chains" value="AP=36-105"/>
</dbReference>
<dbReference type="PDB" id="6GQB">
    <property type="method" value="EM"/>
    <property type="resolution" value="3.90 A"/>
    <property type="chains" value="AP=36-105"/>
</dbReference>
<dbReference type="PDB" id="6GQV">
    <property type="method" value="EM"/>
    <property type="resolution" value="4.00 A"/>
    <property type="chains" value="AP=36-105"/>
</dbReference>
<dbReference type="PDB" id="6HHQ">
    <property type="method" value="X-ray"/>
    <property type="resolution" value="3.10 A"/>
    <property type="chains" value="a/d5=1-108"/>
</dbReference>
<dbReference type="PDB" id="6I7O">
    <property type="method" value="EM"/>
    <property type="resolution" value="5.30 A"/>
    <property type="chains" value="K/Kb=37-105"/>
</dbReference>
<dbReference type="PDB" id="6Q8Y">
    <property type="method" value="EM"/>
    <property type="resolution" value="3.10 A"/>
    <property type="chains" value="K=36-105"/>
</dbReference>
<dbReference type="PDB" id="6RBD">
    <property type="method" value="EM"/>
    <property type="resolution" value="3.47 A"/>
    <property type="chains" value="Z=1-108"/>
</dbReference>
<dbReference type="PDB" id="6RBE">
    <property type="method" value="EM"/>
    <property type="resolution" value="3.80 A"/>
    <property type="chains" value="Z=1-108"/>
</dbReference>
<dbReference type="PDB" id="6S47">
    <property type="method" value="EM"/>
    <property type="resolution" value="3.28 A"/>
    <property type="chains" value="Ba=2-108"/>
</dbReference>
<dbReference type="PDB" id="6SNT">
    <property type="method" value="EM"/>
    <property type="resolution" value="2.80 A"/>
    <property type="chains" value="Z=1-105"/>
</dbReference>
<dbReference type="PDB" id="6SV4">
    <property type="method" value="EM"/>
    <property type="resolution" value="3.30 A"/>
    <property type="chains" value="K/Kb/Kc=1-108"/>
</dbReference>
<dbReference type="PDB" id="6T4Q">
    <property type="method" value="EM"/>
    <property type="resolution" value="2.60 A"/>
    <property type="chains" value="SZ=24-105"/>
</dbReference>
<dbReference type="PDB" id="6T7I">
    <property type="method" value="EM"/>
    <property type="resolution" value="3.20 A"/>
    <property type="chains" value="SZ=1-108"/>
</dbReference>
<dbReference type="PDB" id="6T7T">
    <property type="method" value="EM"/>
    <property type="resolution" value="3.10 A"/>
    <property type="chains" value="SZ=1-108"/>
</dbReference>
<dbReference type="PDB" id="6T83">
    <property type="method" value="EM"/>
    <property type="resolution" value="4.00 A"/>
    <property type="chains" value="0/Zb=1-108"/>
</dbReference>
<dbReference type="PDB" id="6TB3">
    <property type="method" value="EM"/>
    <property type="resolution" value="2.80 A"/>
    <property type="chains" value="K=24-105"/>
</dbReference>
<dbReference type="PDB" id="6TNU">
    <property type="method" value="EM"/>
    <property type="resolution" value="3.10 A"/>
    <property type="chains" value="K=24-105"/>
</dbReference>
<dbReference type="PDB" id="6WDR">
    <property type="method" value="EM"/>
    <property type="resolution" value="3.70 A"/>
    <property type="chains" value="Z=42-104"/>
</dbReference>
<dbReference type="PDB" id="6WOO">
    <property type="method" value="EM"/>
    <property type="resolution" value="2.90 A"/>
    <property type="chains" value="ZZ=36-105"/>
</dbReference>
<dbReference type="PDB" id="6Y7C">
    <property type="method" value="EM"/>
    <property type="resolution" value="3.80 A"/>
    <property type="chains" value="Z=1-108"/>
</dbReference>
<dbReference type="PDB" id="6Z6J">
    <property type="method" value="EM"/>
    <property type="resolution" value="3.40 A"/>
    <property type="chains" value="SZ=1-108"/>
</dbReference>
<dbReference type="PDB" id="6Z6K">
    <property type="method" value="EM"/>
    <property type="resolution" value="3.40 A"/>
    <property type="chains" value="SZ=1-108"/>
</dbReference>
<dbReference type="PDB" id="6ZCE">
    <property type="method" value="EM"/>
    <property type="resolution" value="5.30 A"/>
    <property type="chains" value="a=1-108"/>
</dbReference>
<dbReference type="PDB" id="6ZQF">
    <property type="method" value="EM"/>
    <property type="resolution" value="4.90 A"/>
    <property type="chains" value="DZ=1-108"/>
</dbReference>
<dbReference type="PDB" id="6ZQG">
    <property type="method" value="EM"/>
    <property type="resolution" value="3.50 A"/>
    <property type="chains" value="DZ=1-108"/>
</dbReference>
<dbReference type="PDB" id="6ZU9">
    <property type="method" value="EM"/>
    <property type="resolution" value="6.20 A"/>
    <property type="chains" value="M=1-108"/>
</dbReference>
<dbReference type="PDB" id="6ZVI">
    <property type="method" value="EM"/>
    <property type="resolution" value="3.00 A"/>
    <property type="chains" value="J=37-105"/>
</dbReference>
<dbReference type="PDB" id="7A1G">
    <property type="method" value="EM"/>
    <property type="resolution" value="3.00 A"/>
    <property type="chains" value="L=24-105"/>
</dbReference>
<dbReference type="PDB" id="7B7D">
    <property type="method" value="EM"/>
    <property type="resolution" value="3.30 A"/>
    <property type="chains" value="K=24-105"/>
</dbReference>
<dbReference type="PDB" id="7D8D">
    <property type="method" value="X-ray"/>
    <property type="resolution" value="1.05 A"/>
    <property type="chains" value="D=2-7"/>
</dbReference>
<dbReference type="PDB" id="7MPI">
    <property type="method" value="EM"/>
    <property type="resolution" value="3.05 A"/>
    <property type="chains" value="BZ=37-105"/>
</dbReference>
<dbReference type="PDB" id="7MPJ">
    <property type="method" value="EM"/>
    <property type="resolution" value="2.70 A"/>
    <property type="chains" value="BZ=37-105"/>
</dbReference>
<dbReference type="PDB" id="7N8B">
    <property type="method" value="EM"/>
    <property type="resolution" value="3.05 A"/>
    <property type="chains" value="BZ=37-105"/>
</dbReference>
<dbReference type="PDB" id="7NRC">
    <property type="method" value="EM"/>
    <property type="resolution" value="3.90 A"/>
    <property type="chains" value="SK=24-105"/>
</dbReference>
<dbReference type="PDB" id="7NRD">
    <property type="method" value="EM"/>
    <property type="resolution" value="4.36 A"/>
    <property type="chains" value="SK=37-105"/>
</dbReference>
<dbReference type="PDB" id="7ZPQ">
    <property type="method" value="EM"/>
    <property type="resolution" value="3.47 A"/>
    <property type="chains" value="AZ=24-105"/>
</dbReference>
<dbReference type="PDB" id="7ZRS">
    <property type="method" value="EM"/>
    <property type="resolution" value="4.80 A"/>
    <property type="chains" value="AZ=24-105"/>
</dbReference>
<dbReference type="PDB" id="7ZUW">
    <property type="method" value="EM"/>
    <property type="resolution" value="4.30 A"/>
    <property type="chains" value="AZ=24-105"/>
</dbReference>
<dbReference type="PDB" id="7ZUX">
    <property type="method" value="EM"/>
    <property type="resolution" value="2.50 A"/>
    <property type="chains" value="DZ=24-105"/>
</dbReference>
<dbReference type="PDB" id="7ZW0">
    <property type="method" value="EM"/>
    <property type="resolution" value="2.40 A"/>
    <property type="chains" value="sK=1-108"/>
</dbReference>
<dbReference type="PDB" id="8BN3">
    <property type="method" value="EM"/>
    <property type="resolution" value="2.40 A"/>
    <property type="chains" value="D5=36-105"/>
</dbReference>
<dbReference type="PDB" id="8BQD">
    <property type="method" value="EM"/>
    <property type="resolution" value="3.90 A"/>
    <property type="chains" value="K=24-105"/>
</dbReference>
<dbReference type="PDB" id="8BQX">
    <property type="method" value="EM"/>
    <property type="resolution" value="3.80 A"/>
    <property type="chains" value="K=24-105"/>
</dbReference>
<dbReference type="PDB" id="8C00">
    <property type="method" value="EM"/>
    <property type="resolution" value="2.90 A"/>
    <property type="chains" value="K=1-108"/>
</dbReference>
<dbReference type="PDB" id="8C01">
    <property type="method" value="EM"/>
    <property type="resolution" value="2.70 A"/>
    <property type="chains" value="K=1-108"/>
</dbReference>
<dbReference type="PDB" id="8CAH">
    <property type="method" value="EM"/>
    <property type="resolution" value="3.00 A"/>
    <property type="chains" value="L=1-108"/>
</dbReference>
<dbReference type="PDB" id="8CAS">
    <property type="method" value="EM"/>
    <property type="resolution" value="3.30 A"/>
    <property type="chains" value="M=1-108"/>
</dbReference>
<dbReference type="PDB" id="8CBJ">
    <property type="method" value="EM"/>
    <property type="resolution" value="3.80 A"/>
    <property type="chains" value="Z=1-108"/>
</dbReference>
<dbReference type="PDB" id="8CCS">
    <property type="method" value="EM"/>
    <property type="resolution" value="1.97 A"/>
    <property type="chains" value="1=1-108"/>
</dbReference>
<dbReference type="PDB" id="8CDL">
    <property type="method" value="EM"/>
    <property type="resolution" value="2.72 A"/>
    <property type="chains" value="1=1-108"/>
</dbReference>
<dbReference type="PDB" id="8CDR">
    <property type="method" value="EM"/>
    <property type="resolution" value="2.04 A"/>
    <property type="chains" value="1=1-108"/>
</dbReference>
<dbReference type="PDB" id="8CEH">
    <property type="method" value="EM"/>
    <property type="resolution" value="2.05 A"/>
    <property type="chains" value="1=1-108"/>
</dbReference>
<dbReference type="PDB" id="8CF5">
    <property type="method" value="EM"/>
    <property type="resolution" value="2.71 A"/>
    <property type="chains" value="1=1-108"/>
</dbReference>
<dbReference type="PDB" id="8CG8">
    <property type="method" value="EM"/>
    <property type="resolution" value="2.57 A"/>
    <property type="chains" value="1=1-108"/>
</dbReference>
<dbReference type="PDB" id="8CGN">
    <property type="method" value="EM"/>
    <property type="resolution" value="2.28 A"/>
    <property type="chains" value="1=1-108"/>
</dbReference>
<dbReference type="PDB" id="8CIV">
    <property type="method" value="EM"/>
    <property type="resolution" value="2.47 A"/>
    <property type="chains" value="1=1-108"/>
</dbReference>
<dbReference type="PDB" id="8CKU">
    <property type="method" value="EM"/>
    <property type="resolution" value="3.11 A"/>
    <property type="chains" value="1=1-108"/>
</dbReference>
<dbReference type="PDB" id="8CMJ">
    <property type="method" value="EM"/>
    <property type="resolution" value="3.79 A"/>
    <property type="chains" value="1=1-108"/>
</dbReference>
<dbReference type="PDB" id="8K2D">
    <property type="method" value="EM"/>
    <property type="resolution" value="3.20 A"/>
    <property type="chains" value="SZ=1-108"/>
</dbReference>
<dbReference type="PDB" id="8K82">
    <property type="method" value="EM"/>
    <property type="resolution" value="3.00 A"/>
    <property type="chains" value="SZ=1-108"/>
</dbReference>
<dbReference type="PDB" id="8P4V">
    <property type="method" value="X-ray"/>
    <property type="resolution" value="3.16 A"/>
    <property type="chains" value="a/d5=1-108"/>
</dbReference>
<dbReference type="PDB" id="8P9A">
    <property type="method" value="X-ray"/>
    <property type="resolution" value="2.90 A"/>
    <property type="chains" value="a/d5=1-108"/>
</dbReference>
<dbReference type="PDB" id="8T2X">
    <property type="method" value="EM"/>
    <property type="resolution" value="2.46 A"/>
    <property type="chains" value="BZ=1-108"/>
</dbReference>
<dbReference type="PDB" id="8T2Y">
    <property type="method" value="EM"/>
    <property type="resolution" value="2.20 A"/>
    <property type="chains" value="BZ=1-108"/>
</dbReference>
<dbReference type="PDB" id="8T2Z">
    <property type="method" value="EM"/>
    <property type="resolution" value="2.40 A"/>
    <property type="chains" value="BZ=1-108"/>
</dbReference>
<dbReference type="PDB" id="8T30">
    <property type="method" value="EM"/>
    <property type="resolution" value="2.88 A"/>
    <property type="chains" value="BZ=1-108"/>
</dbReference>
<dbReference type="PDB" id="8T3A">
    <property type="method" value="EM"/>
    <property type="resolution" value="2.86 A"/>
    <property type="chains" value="BZ=1-108"/>
</dbReference>
<dbReference type="PDB" id="8T3B">
    <property type="method" value="EM"/>
    <property type="resolution" value="3.08 A"/>
    <property type="chains" value="BZ=1-108"/>
</dbReference>
<dbReference type="PDB" id="8T3C">
    <property type="method" value="EM"/>
    <property type="resolution" value="3.86 A"/>
    <property type="chains" value="BZ=1-108"/>
</dbReference>
<dbReference type="PDB" id="8T3D">
    <property type="method" value="EM"/>
    <property type="resolution" value="2.95 A"/>
    <property type="chains" value="BZ=1-108"/>
</dbReference>
<dbReference type="PDB" id="8T3E">
    <property type="method" value="EM"/>
    <property type="resolution" value="3.04 A"/>
    <property type="chains" value="BZ=1-108"/>
</dbReference>
<dbReference type="PDB" id="8T3F">
    <property type="method" value="EM"/>
    <property type="resolution" value="3.09 A"/>
    <property type="chains" value="BZ=1-108"/>
</dbReference>
<dbReference type="PDB" id="8UT0">
    <property type="method" value="EM"/>
    <property type="resolution" value="3.22 A"/>
    <property type="chains" value="AA=7-108"/>
</dbReference>
<dbReference type="PDB" id="8UTI">
    <property type="method" value="EM"/>
    <property type="resolution" value="3.13 A"/>
    <property type="chains" value="AA=1-108"/>
</dbReference>
<dbReference type="PDB" id="8XU8">
    <property type="method" value="EM"/>
    <property type="resolution" value="3.40 A"/>
    <property type="chains" value="SK=1-108"/>
</dbReference>
<dbReference type="PDB" id="8Y0U">
    <property type="method" value="EM"/>
    <property type="resolution" value="3.59 A"/>
    <property type="chains" value="SZ=1-108"/>
</dbReference>
<dbReference type="PDB" id="8YLD">
    <property type="method" value="EM"/>
    <property type="resolution" value="3.90 A"/>
    <property type="chains" value="SK=1-108"/>
</dbReference>
<dbReference type="PDB" id="8YLR">
    <property type="method" value="EM"/>
    <property type="resolution" value="3.90 A"/>
    <property type="chains" value="SK=1-108"/>
</dbReference>
<dbReference type="PDB" id="8Z70">
    <property type="method" value="EM"/>
    <property type="resolution" value="3.20 A"/>
    <property type="chains" value="SK=1-108"/>
</dbReference>
<dbReference type="PDB" id="8Z71">
    <property type="method" value="EM"/>
    <property type="resolution" value="3.60 A"/>
    <property type="chains" value="SK=1-108"/>
</dbReference>
<dbReference type="PDB" id="9F9S">
    <property type="method" value="EM"/>
    <property type="resolution" value="2.90 A"/>
    <property type="chains" value="Rz/Sz=1-108"/>
</dbReference>
<dbReference type="PDBsum" id="3J6X"/>
<dbReference type="PDBsum" id="3J6Y"/>
<dbReference type="PDBsum" id="3J77"/>
<dbReference type="PDBsum" id="3J78"/>
<dbReference type="PDBsum" id="4U3M"/>
<dbReference type="PDBsum" id="4U3N"/>
<dbReference type="PDBsum" id="4U3U"/>
<dbReference type="PDBsum" id="4U4N"/>
<dbReference type="PDBsum" id="4U4O"/>
<dbReference type="PDBsum" id="4U4Q"/>
<dbReference type="PDBsum" id="4U4R"/>
<dbReference type="PDBsum" id="4U4U"/>
<dbReference type="PDBsum" id="4U4Y"/>
<dbReference type="PDBsum" id="4U4Z"/>
<dbReference type="PDBsum" id="4U50"/>
<dbReference type="PDBsum" id="4U51"/>
<dbReference type="PDBsum" id="4U52"/>
<dbReference type="PDBsum" id="4U53"/>
<dbReference type="PDBsum" id="4U55"/>
<dbReference type="PDBsum" id="4U56"/>
<dbReference type="PDBsum" id="4U6F"/>
<dbReference type="PDBsum" id="4V6I"/>
<dbReference type="PDBsum" id="4V7R"/>
<dbReference type="PDBsum" id="4V88"/>
<dbReference type="PDBsum" id="4V8Y"/>
<dbReference type="PDBsum" id="4V8Z"/>
<dbReference type="PDBsum" id="4V92"/>
<dbReference type="PDBsum" id="5DAT"/>
<dbReference type="PDBsum" id="5DC3"/>
<dbReference type="PDBsum" id="5DGE"/>
<dbReference type="PDBsum" id="5DGF"/>
<dbReference type="PDBsum" id="5DGV"/>
<dbReference type="PDBsum" id="5FCI"/>
<dbReference type="PDBsum" id="5FCJ"/>
<dbReference type="PDBsum" id="5I4L"/>
<dbReference type="PDBsum" id="5JUO"/>
<dbReference type="PDBsum" id="5JUP"/>
<dbReference type="PDBsum" id="5JUS"/>
<dbReference type="PDBsum" id="5JUT"/>
<dbReference type="PDBsum" id="5JUU"/>
<dbReference type="PDBsum" id="5LYB"/>
<dbReference type="PDBsum" id="5M1J"/>
<dbReference type="PDBsum" id="5MC6"/>
<dbReference type="PDBsum" id="5MEI"/>
<dbReference type="PDBsum" id="5NDG"/>
<dbReference type="PDBsum" id="5NDV"/>
<dbReference type="PDBsum" id="5NDW"/>
<dbReference type="PDBsum" id="5OBM"/>
<dbReference type="PDBsum" id="5ON6"/>
<dbReference type="PDBsum" id="5TBW"/>
<dbReference type="PDBsum" id="5TGA"/>
<dbReference type="PDBsum" id="5TGM"/>
<dbReference type="PDBsum" id="6EML"/>
<dbReference type="PDBsum" id="6FAI"/>
<dbReference type="PDBsum" id="6GQ1"/>
<dbReference type="PDBsum" id="6GQB"/>
<dbReference type="PDBsum" id="6GQV"/>
<dbReference type="PDBsum" id="6HHQ"/>
<dbReference type="PDBsum" id="6I7O"/>
<dbReference type="PDBsum" id="6Q8Y"/>
<dbReference type="PDBsum" id="6RBD"/>
<dbReference type="PDBsum" id="6RBE"/>
<dbReference type="PDBsum" id="6S47"/>
<dbReference type="PDBsum" id="6SNT"/>
<dbReference type="PDBsum" id="6SV4"/>
<dbReference type="PDBsum" id="6T4Q"/>
<dbReference type="PDBsum" id="6T7I"/>
<dbReference type="PDBsum" id="6T7T"/>
<dbReference type="PDBsum" id="6T83"/>
<dbReference type="PDBsum" id="6TB3"/>
<dbReference type="PDBsum" id="6TNU"/>
<dbReference type="PDBsum" id="6WDR"/>
<dbReference type="PDBsum" id="6WOO"/>
<dbReference type="PDBsum" id="6Y7C"/>
<dbReference type="PDBsum" id="6Z6J"/>
<dbReference type="PDBsum" id="6Z6K"/>
<dbReference type="PDBsum" id="6ZCE"/>
<dbReference type="PDBsum" id="6ZQF"/>
<dbReference type="PDBsum" id="6ZQG"/>
<dbReference type="PDBsum" id="6ZU9"/>
<dbReference type="PDBsum" id="6ZVI"/>
<dbReference type="PDBsum" id="7A1G"/>
<dbReference type="PDBsum" id="7B7D"/>
<dbReference type="PDBsum" id="7D8D"/>
<dbReference type="PDBsum" id="7MPI"/>
<dbReference type="PDBsum" id="7MPJ"/>
<dbReference type="PDBsum" id="7N8B"/>
<dbReference type="PDBsum" id="7NRC"/>
<dbReference type="PDBsum" id="7NRD"/>
<dbReference type="PDBsum" id="7ZPQ"/>
<dbReference type="PDBsum" id="7ZRS"/>
<dbReference type="PDBsum" id="7ZUW"/>
<dbReference type="PDBsum" id="7ZUX"/>
<dbReference type="PDBsum" id="7ZW0"/>
<dbReference type="PDBsum" id="8BN3"/>
<dbReference type="PDBsum" id="8BQD"/>
<dbReference type="PDBsum" id="8BQX"/>
<dbReference type="PDBsum" id="8C00"/>
<dbReference type="PDBsum" id="8C01"/>
<dbReference type="PDBsum" id="8CAH"/>
<dbReference type="PDBsum" id="8CAS"/>
<dbReference type="PDBsum" id="8CBJ"/>
<dbReference type="PDBsum" id="8CCS"/>
<dbReference type="PDBsum" id="8CDL"/>
<dbReference type="PDBsum" id="8CDR"/>
<dbReference type="PDBsum" id="8CEH"/>
<dbReference type="PDBsum" id="8CF5"/>
<dbReference type="PDBsum" id="8CG8"/>
<dbReference type="PDBsum" id="8CGN"/>
<dbReference type="PDBsum" id="8CIV"/>
<dbReference type="PDBsum" id="8CKU"/>
<dbReference type="PDBsum" id="8CMJ"/>
<dbReference type="PDBsum" id="8K2D"/>
<dbReference type="PDBsum" id="8K82"/>
<dbReference type="PDBsum" id="8P4V"/>
<dbReference type="PDBsum" id="8P9A"/>
<dbReference type="PDBsum" id="8T2X"/>
<dbReference type="PDBsum" id="8T2Y"/>
<dbReference type="PDBsum" id="8T2Z"/>
<dbReference type="PDBsum" id="8T30"/>
<dbReference type="PDBsum" id="8T3A"/>
<dbReference type="PDBsum" id="8T3B"/>
<dbReference type="PDBsum" id="8T3C"/>
<dbReference type="PDBsum" id="8T3D"/>
<dbReference type="PDBsum" id="8T3E"/>
<dbReference type="PDBsum" id="8T3F"/>
<dbReference type="PDBsum" id="8UT0"/>
<dbReference type="PDBsum" id="8UTI"/>
<dbReference type="PDBsum" id="8XU8"/>
<dbReference type="PDBsum" id="8Y0U"/>
<dbReference type="PDBsum" id="8YLD"/>
<dbReference type="PDBsum" id="8YLR"/>
<dbReference type="PDBsum" id="8Z70"/>
<dbReference type="PDBsum" id="8Z71"/>
<dbReference type="PDBsum" id="9F9S"/>
<dbReference type="EMDB" id="EMD-0047"/>
<dbReference type="EMDB" id="EMD-0048"/>
<dbReference type="EMDB" id="EMD-0049"/>
<dbReference type="EMDB" id="EMD-10098"/>
<dbReference type="EMDB" id="EMD-10262"/>
<dbReference type="EMDB" id="EMD-10315"/>
<dbReference type="EMDB" id="EMD-10377"/>
<dbReference type="EMDB" id="EMD-10396"/>
<dbReference type="EMDB" id="EMD-10397"/>
<dbReference type="EMDB" id="EMD-10398"/>
<dbReference type="EMDB" id="EMD-10431"/>
<dbReference type="EMDB" id="EMD-10537"/>
<dbReference type="EMDB" id="EMD-10713"/>
<dbReference type="EMDB" id="EMD-11096"/>
<dbReference type="EMDB" id="EMD-11097"/>
<dbReference type="EMDB" id="EMD-11160"/>
<dbReference type="EMDB" id="EMD-11362"/>
<dbReference type="EMDB" id="EMD-11363"/>
<dbReference type="EMDB" id="EMD-11439"/>
<dbReference type="EMDB" id="EMD-11608"/>
<dbReference type="EMDB" id="EMD-12081"/>
<dbReference type="EMDB" id="EMD-12534"/>
<dbReference type="EMDB" id="EMD-12535"/>
<dbReference type="EMDB" id="EMD-14979"/>
<dbReference type="EMDB" id="EMD-14990"/>
<dbReference type="EMDB" id="EMD-16191"/>
<dbReference type="EMDB" id="EMD-16347"/>
<dbReference type="EMDB" id="EMD-16349"/>
<dbReference type="EMDB" id="EMD-16525"/>
<dbReference type="EMDB" id="EMD-16533"/>
<dbReference type="EMDB" id="EMD-16541"/>
<dbReference type="EMDB" id="EMD-16563"/>
<dbReference type="EMDB" id="EMD-16591"/>
<dbReference type="EMDB" id="EMD-16594"/>
<dbReference type="EMDB" id="EMD-16609"/>
<dbReference type="EMDB" id="EMD-16616"/>
<dbReference type="EMDB" id="EMD-16634"/>
<dbReference type="EMDB" id="EMD-16648"/>
<dbReference type="EMDB" id="EMD-16684"/>
<dbReference type="EMDB" id="EMD-16702"/>
<dbReference type="EMDB" id="EMD-16729"/>
<dbReference type="EMDB" id="EMD-21644"/>
<dbReference type="EMDB" id="EMD-21859"/>
<dbReference type="EMDB" id="EMD-23934"/>
<dbReference type="EMDB" id="EMD-23935"/>
<dbReference type="EMDB" id="EMD-24235"/>
<dbReference type="EMDB" id="EMD-3461"/>
<dbReference type="EMDB" id="EMD-36839"/>
<dbReference type="EMDB" id="EMD-36945"/>
<dbReference type="EMDB" id="EMD-38660"/>
<dbReference type="EMDB" id="EMD-4140"/>
<dbReference type="EMDB" id="EMD-4214"/>
<dbReference type="EMDB" id="EMD-4427"/>
<dbReference type="EMDB" id="EMD-4474"/>
<dbReference type="EMDB" id="EMD-4792"/>
<dbReference type="EMDB" id="EMD-4793"/>
<dbReference type="EMDB" id="EMD-50259"/>
<dbReference type="SMR" id="Q3E792"/>
<dbReference type="BioGRID" id="33268">
    <property type="interactions" value="365"/>
</dbReference>
<dbReference type="ComplexPortal" id="CPX-1599">
    <property type="entry name" value="40S cytosolic small ribosomal subunit"/>
</dbReference>
<dbReference type="FunCoup" id="Q3E792">
    <property type="interactions" value="1057"/>
</dbReference>
<dbReference type="IntAct" id="Q3E792">
    <property type="interactions" value="85"/>
</dbReference>
<dbReference type="MINT" id="Q3E792"/>
<dbReference type="STRING" id="4932.YGR027C"/>
<dbReference type="CarbonylDB" id="Q3E792"/>
<dbReference type="iPTMnet" id="Q3E792"/>
<dbReference type="PaxDb" id="4932-YGR027C"/>
<dbReference type="PeptideAtlas" id="Q3E792"/>
<dbReference type="TopDownProteomics" id="Q3E792"/>
<dbReference type="EnsemblFungi" id="YGR027C_mRNA">
    <property type="protein sequence ID" value="YGR027C"/>
    <property type="gene ID" value="YGR027C"/>
</dbReference>
<dbReference type="GeneID" id="852911"/>
<dbReference type="KEGG" id="sce:YGR027C"/>
<dbReference type="AGR" id="SGD:S000003259"/>
<dbReference type="SGD" id="S000003259">
    <property type="gene designation" value="RPS25A"/>
</dbReference>
<dbReference type="VEuPathDB" id="FungiDB:YGR027C"/>
<dbReference type="eggNOG" id="KOG1767">
    <property type="taxonomic scope" value="Eukaryota"/>
</dbReference>
<dbReference type="GeneTree" id="ENSGT00390000004856"/>
<dbReference type="HOGENOM" id="CLU_129470_4_0_1"/>
<dbReference type="InParanoid" id="Q3E792"/>
<dbReference type="OMA" id="RIVHHSG"/>
<dbReference type="OrthoDB" id="10263513at2759"/>
<dbReference type="BioCyc" id="YEAST:G3O-30751-MONOMER"/>
<dbReference type="Reactome" id="R-SCE-156827">
    <property type="pathway name" value="L13a-mediated translational silencing of Ceruloplasmin expression"/>
</dbReference>
<dbReference type="Reactome" id="R-SCE-1799339">
    <property type="pathway name" value="SRP-dependent cotranslational protein targeting to membrane"/>
</dbReference>
<dbReference type="Reactome" id="R-SCE-72649">
    <property type="pathway name" value="Translation initiation complex formation"/>
</dbReference>
<dbReference type="Reactome" id="R-SCE-72689">
    <property type="pathway name" value="Formation of a pool of free 40S subunits"/>
</dbReference>
<dbReference type="Reactome" id="R-SCE-72695">
    <property type="pathway name" value="Formation of the ternary complex, and subsequently, the 43S complex"/>
</dbReference>
<dbReference type="Reactome" id="R-SCE-72702">
    <property type="pathway name" value="Ribosomal scanning and start codon recognition"/>
</dbReference>
<dbReference type="Reactome" id="R-SCE-72706">
    <property type="pathway name" value="GTP hydrolysis and joining of the 60S ribosomal subunit"/>
</dbReference>
<dbReference type="Reactome" id="R-SCE-975956">
    <property type="pathway name" value="Nonsense Mediated Decay (NMD) independent of the Exon Junction Complex (EJC)"/>
</dbReference>
<dbReference type="Reactome" id="R-SCE-975957">
    <property type="pathway name" value="Nonsense Mediated Decay (NMD) enhanced by the Exon Junction Complex (EJC)"/>
</dbReference>
<dbReference type="BioGRID-ORCS" id="852911">
    <property type="hits" value="8 hits in 10 CRISPR screens"/>
</dbReference>
<dbReference type="PRO" id="PR:Q3E792"/>
<dbReference type="Proteomes" id="UP000002311">
    <property type="component" value="Chromosome VII"/>
</dbReference>
<dbReference type="RNAct" id="Q3E792">
    <property type="molecule type" value="protein"/>
</dbReference>
<dbReference type="GO" id="GO:0005829">
    <property type="term" value="C:cytosol"/>
    <property type="evidence" value="ECO:0000304"/>
    <property type="project" value="Reactome"/>
</dbReference>
<dbReference type="GO" id="GO:0022627">
    <property type="term" value="C:cytosolic small ribosomal subunit"/>
    <property type="evidence" value="ECO:0000314"/>
    <property type="project" value="SGD"/>
</dbReference>
<dbReference type="GO" id="GO:0003735">
    <property type="term" value="F:structural constituent of ribosome"/>
    <property type="evidence" value="ECO:0000314"/>
    <property type="project" value="SGD"/>
</dbReference>
<dbReference type="GO" id="GO:0002181">
    <property type="term" value="P:cytoplasmic translation"/>
    <property type="evidence" value="ECO:0000305"/>
    <property type="project" value="SGD"/>
</dbReference>
<dbReference type="FunFam" id="3.30.63.20:FF:000001">
    <property type="entry name" value="40S ribosomal protein S25"/>
    <property type="match status" value="1"/>
</dbReference>
<dbReference type="Gene3D" id="3.30.63.20">
    <property type="match status" value="1"/>
</dbReference>
<dbReference type="InterPro" id="IPR004977">
    <property type="entry name" value="Ribosomal_eS25"/>
</dbReference>
<dbReference type="InterPro" id="IPR036390">
    <property type="entry name" value="WH_DNA-bd_sf"/>
</dbReference>
<dbReference type="PANTHER" id="PTHR12850">
    <property type="entry name" value="40S RIBOSOMAL PROTEIN S25"/>
    <property type="match status" value="1"/>
</dbReference>
<dbReference type="Pfam" id="PF03297">
    <property type="entry name" value="Ribosomal_S25"/>
    <property type="match status" value="1"/>
</dbReference>
<dbReference type="SUPFAM" id="SSF46785">
    <property type="entry name" value="Winged helix' DNA-binding domain"/>
    <property type="match status" value="1"/>
</dbReference>
<gene>
    <name evidence="8" type="primary">RPS25A</name>
    <name type="synonym">RPS31A</name>
    <name type="ordered locus">YGR027C</name>
</gene>
<accession>Q3E792</accession>
<accession>A2TBN4</accession>
<accession>D6VUG0</accession>
<accession>P05758</accession>
<accession>P07282</accession>
<accession>Q45U56</accession>
<evidence type="ECO:0000256" key="1">
    <source>
        <dbReference type="SAM" id="MobiDB-lite"/>
    </source>
</evidence>
<evidence type="ECO:0000269" key="2">
    <source>
    </source>
</evidence>
<evidence type="ECO:0000269" key="3">
    <source>
    </source>
</evidence>
<evidence type="ECO:0000269" key="4">
    <source>
    </source>
</evidence>
<evidence type="ECO:0000269" key="5">
    <source>
    </source>
</evidence>
<evidence type="ECO:0000269" key="6">
    <source>
    </source>
</evidence>
<evidence type="ECO:0000303" key="7">
    <source>
    </source>
</evidence>
<evidence type="ECO:0000303" key="8">
    <source>
    </source>
</evidence>
<evidence type="ECO:0000305" key="9"/>
<evidence type="ECO:0000305" key="10">
    <source>
    </source>
</evidence>
<evidence type="ECO:0000305" key="11">
    <source>
    </source>
</evidence>
<evidence type="ECO:0000305" key="12">
    <source>
    </source>
</evidence>
<evidence type="ECO:0007829" key="13">
    <source>
        <dbReference type="PDB" id="6RBD"/>
    </source>
</evidence>
<evidence type="ECO:0007829" key="14">
    <source>
        <dbReference type="PDB" id="8C01"/>
    </source>
</evidence>
<evidence type="ECO:0007829" key="15">
    <source>
        <dbReference type="PDB" id="8CAS"/>
    </source>
</evidence>
<sequence length="108" mass="12039">MPPKQQLSKAAKAAAALAGGKKSKKKWSKKSMKDRAQHAVILDQEKYDRILKEVPTYRYVSVSVLVDRLKIGGSLARIALRHLEKEGIIKPISKHSKQAIYTRATASE</sequence>
<keyword id="KW-0002">3D-structure</keyword>
<keyword id="KW-0963">Cytoplasm</keyword>
<keyword id="KW-0903">Direct protein sequencing</keyword>
<keyword id="KW-0488">Methylation</keyword>
<keyword id="KW-1185">Reference proteome</keyword>
<keyword id="KW-0687">Ribonucleoprotein</keyword>
<keyword id="KW-0689">Ribosomal protein</keyword>
<proteinExistence type="evidence at protein level"/>
<organism>
    <name type="scientific">Saccharomyces cerevisiae (strain ATCC 204508 / S288c)</name>
    <name type="common">Baker's yeast</name>
    <dbReference type="NCBI Taxonomy" id="559292"/>
    <lineage>
        <taxon>Eukaryota</taxon>
        <taxon>Fungi</taxon>
        <taxon>Dikarya</taxon>
        <taxon>Ascomycota</taxon>
        <taxon>Saccharomycotina</taxon>
        <taxon>Saccharomycetes</taxon>
        <taxon>Saccharomycetales</taxon>
        <taxon>Saccharomycetaceae</taxon>
        <taxon>Saccharomyces</taxon>
    </lineage>
</organism>
<feature type="initiator methionine" description="Removed">
    <location>
        <position position="1"/>
    </location>
</feature>
<feature type="chain" id="PRO_0000043376" description="Small ribosomal subunit protein eS25A">
    <location>
        <begin position="2"/>
        <end position="108"/>
    </location>
</feature>
<feature type="region of interest" description="Disordered" evidence="1">
    <location>
        <begin position="1"/>
        <end position="30"/>
    </location>
</feature>
<feature type="compositionally biased region" description="Low complexity" evidence="1">
    <location>
        <begin position="1"/>
        <end position="20"/>
    </location>
</feature>
<feature type="compositionally biased region" description="Basic residues" evidence="1">
    <location>
        <begin position="21"/>
        <end position="30"/>
    </location>
</feature>
<feature type="modified residue" description="N,N-dimethylproline; by NTM1" evidence="5">
    <location>
        <position position="2"/>
    </location>
</feature>
<feature type="sequence variant" description="In strain: SK1." evidence="4">
    <original>S</original>
    <variation>F</variation>
    <location>
        <position position="8"/>
    </location>
</feature>
<feature type="sequence variant" description="In strain: SK1." evidence="4">
    <original>A</original>
    <variation>T</variation>
    <location>
        <position position="13"/>
    </location>
</feature>
<feature type="sequence conflict" description="In Ref. 7; AA sequence." evidence="9" ref="7">
    <original>A</original>
    <variation>R</variation>
    <location>
        <position position="16"/>
    </location>
</feature>
<feature type="strand" evidence="15">
    <location>
        <begin position="39"/>
        <end position="41"/>
    </location>
</feature>
<feature type="helix" evidence="14">
    <location>
        <begin position="44"/>
        <end position="53"/>
    </location>
</feature>
<feature type="helix" evidence="14">
    <location>
        <begin position="54"/>
        <end position="56"/>
    </location>
</feature>
<feature type="strand" evidence="14">
    <location>
        <begin position="58"/>
        <end position="60"/>
    </location>
</feature>
<feature type="helix" evidence="14">
    <location>
        <begin position="62"/>
        <end position="68"/>
    </location>
</feature>
<feature type="strand" evidence="13">
    <location>
        <begin position="69"/>
        <end position="71"/>
    </location>
</feature>
<feature type="helix" evidence="14">
    <location>
        <begin position="73"/>
        <end position="85"/>
    </location>
</feature>
<feature type="strand" evidence="14">
    <location>
        <begin position="88"/>
        <end position="94"/>
    </location>
</feature>
<feature type="strand" evidence="14">
    <location>
        <begin position="99"/>
        <end position="102"/>
    </location>
</feature>